<accession>P9WNM4</accession>
<accession>L0T6E9</accession>
<accession>Q10600</accession>
<protein>
    <recommendedName>
        <fullName>Bifunctional enzyme CysN/CysC</fullName>
    </recommendedName>
    <domain>
        <recommendedName>
            <fullName>Sulfate adenylyltransferase subunit 1</fullName>
            <ecNumber>2.7.7.4</ecNumber>
        </recommendedName>
        <alternativeName>
            <fullName>ATP-sulfurylase large subunit</fullName>
        </alternativeName>
        <alternativeName>
            <fullName>Sulfate adenylate transferase</fullName>
            <shortName>SAT</shortName>
        </alternativeName>
    </domain>
    <domain>
        <recommendedName>
            <fullName>Adenylyl-sulfate kinase</fullName>
            <ecNumber>2.7.1.25</ecNumber>
        </recommendedName>
        <alternativeName>
            <fullName>APS kinase</fullName>
        </alternativeName>
        <alternativeName>
            <fullName>ATP adenosine-5'-phosphosulfate 3'-phosphotransferase</fullName>
        </alternativeName>
    </domain>
</protein>
<reference key="1">
    <citation type="journal article" date="2002" name="J. Bacteriol.">
        <title>Whole-genome comparison of Mycobacterium tuberculosis clinical and laboratory strains.</title>
        <authorList>
            <person name="Fleischmann R.D."/>
            <person name="Alland D."/>
            <person name="Eisen J.A."/>
            <person name="Carpenter L."/>
            <person name="White O."/>
            <person name="Peterson J.D."/>
            <person name="DeBoy R.T."/>
            <person name="Dodson R.J."/>
            <person name="Gwinn M.L."/>
            <person name="Haft D.H."/>
            <person name="Hickey E.K."/>
            <person name="Kolonay J.F."/>
            <person name="Nelson W.C."/>
            <person name="Umayam L.A."/>
            <person name="Ermolaeva M.D."/>
            <person name="Salzberg S.L."/>
            <person name="Delcher A."/>
            <person name="Utterback T.R."/>
            <person name="Weidman J.F."/>
            <person name="Khouri H.M."/>
            <person name="Gill J."/>
            <person name="Mikula A."/>
            <person name="Bishai W."/>
            <person name="Jacobs W.R. Jr."/>
            <person name="Venter J.C."/>
            <person name="Fraser C.M."/>
        </authorList>
    </citation>
    <scope>NUCLEOTIDE SEQUENCE [LARGE SCALE GENOMIC DNA]</scope>
    <source>
        <strain>CDC 1551 / Oshkosh</strain>
    </source>
</reference>
<evidence type="ECO:0000250" key="1"/>
<evidence type="ECO:0000255" key="2"/>
<evidence type="ECO:0000256" key="3">
    <source>
        <dbReference type="SAM" id="MobiDB-lite"/>
    </source>
</evidence>
<evidence type="ECO:0000305" key="4"/>
<feature type="chain" id="PRO_0000427101" description="Bifunctional enzyme CysN/CysC">
    <location>
        <begin position="1"/>
        <end position="614"/>
    </location>
</feature>
<feature type="domain" description="tr-type G">
    <location>
        <begin position="2"/>
        <end position="217"/>
    </location>
</feature>
<feature type="region of interest" description="Sulfate adenylyltransferase">
    <location>
        <begin position="1"/>
        <end position="441"/>
    </location>
</feature>
<feature type="region of interest" description="G1" evidence="1">
    <location>
        <begin position="11"/>
        <end position="18"/>
    </location>
</feature>
<feature type="region of interest" description="G2" evidence="1">
    <location>
        <begin position="67"/>
        <end position="71"/>
    </location>
</feature>
<feature type="region of interest" description="G3" evidence="1">
    <location>
        <begin position="88"/>
        <end position="91"/>
    </location>
</feature>
<feature type="region of interest" description="G4" evidence="1">
    <location>
        <begin position="143"/>
        <end position="146"/>
    </location>
</feature>
<feature type="region of interest" description="G5" evidence="1">
    <location>
        <begin position="180"/>
        <end position="182"/>
    </location>
</feature>
<feature type="region of interest" description="Adenylyl-sulfate kinase">
    <location>
        <begin position="442"/>
        <end position="614"/>
    </location>
</feature>
<feature type="region of interest" description="Disordered" evidence="3">
    <location>
        <begin position="578"/>
        <end position="597"/>
    </location>
</feature>
<feature type="compositionally biased region" description="Basic and acidic residues" evidence="3">
    <location>
        <begin position="587"/>
        <end position="597"/>
    </location>
</feature>
<feature type="active site" description="Phosphoserine intermediate" evidence="1">
    <location>
        <position position="524"/>
    </location>
</feature>
<feature type="binding site" evidence="1">
    <location>
        <begin position="11"/>
        <end position="18"/>
    </location>
    <ligand>
        <name>GTP</name>
        <dbReference type="ChEBI" id="CHEBI:37565"/>
    </ligand>
</feature>
<feature type="binding site" evidence="1">
    <location>
        <begin position="88"/>
        <end position="92"/>
    </location>
    <ligand>
        <name>GTP</name>
        <dbReference type="ChEBI" id="CHEBI:37565"/>
    </ligand>
</feature>
<feature type="binding site" evidence="1">
    <location>
        <begin position="143"/>
        <end position="146"/>
    </location>
    <ligand>
        <name>GTP</name>
        <dbReference type="ChEBI" id="CHEBI:37565"/>
    </ligand>
</feature>
<feature type="binding site" evidence="2">
    <location>
        <begin position="450"/>
        <end position="457"/>
    </location>
    <ligand>
        <name>ATP</name>
        <dbReference type="ChEBI" id="CHEBI:30616"/>
    </ligand>
</feature>
<proteinExistence type="inferred from homology"/>
<gene>
    <name type="primary">cysNC</name>
    <name type="synonym">cysN</name>
    <name type="ordered locus">MT1324</name>
</gene>
<keyword id="KW-0067">ATP-binding</keyword>
<keyword id="KW-0342">GTP-binding</keyword>
<keyword id="KW-0418">Kinase</keyword>
<keyword id="KW-0511">Multifunctional enzyme</keyword>
<keyword id="KW-0547">Nucleotide-binding</keyword>
<keyword id="KW-0548">Nucleotidyltransferase</keyword>
<keyword id="KW-1185">Reference proteome</keyword>
<keyword id="KW-0808">Transferase</keyword>
<comment type="function">
    <text evidence="1">With CysD forms the ATP sulfurylase (ATPS) that catalyzes the adenylation of sulfate producing adenosine 5'-phosphosulfate (APS) and diphosphate, the first enzymatic step in sulfur assimilation pathway. APS synthesis involves the formation of a high-energy phosphoric-sulfuric acid anhydride bond driven by GTP hydrolysis by CysN coupled to ATP hydrolysis by CysD.</text>
</comment>
<comment type="function">
    <text evidence="1">APS kinase catalyzes the synthesis of activated sulfate.</text>
</comment>
<comment type="catalytic activity">
    <reaction>
        <text>sulfate + ATP + H(+) = adenosine 5'-phosphosulfate + diphosphate</text>
        <dbReference type="Rhea" id="RHEA:18133"/>
        <dbReference type="ChEBI" id="CHEBI:15378"/>
        <dbReference type="ChEBI" id="CHEBI:16189"/>
        <dbReference type="ChEBI" id="CHEBI:30616"/>
        <dbReference type="ChEBI" id="CHEBI:33019"/>
        <dbReference type="ChEBI" id="CHEBI:58243"/>
        <dbReference type="EC" id="2.7.7.4"/>
    </reaction>
</comment>
<comment type="catalytic activity">
    <reaction>
        <text>adenosine 5'-phosphosulfate + ATP = 3'-phosphoadenylyl sulfate + ADP + H(+)</text>
        <dbReference type="Rhea" id="RHEA:24152"/>
        <dbReference type="ChEBI" id="CHEBI:15378"/>
        <dbReference type="ChEBI" id="CHEBI:30616"/>
        <dbReference type="ChEBI" id="CHEBI:58243"/>
        <dbReference type="ChEBI" id="CHEBI:58339"/>
        <dbReference type="ChEBI" id="CHEBI:456216"/>
        <dbReference type="EC" id="2.7.1.25"/>
    </reaction>
</comment>
<comment type="pathway">
    <text>Sulfur metabolism; hydrogen sulfide biosynthesis; sulfite from sulfate: step 1/3.</text>
</comment>
<comment type="pathway">
    <text>Sulfur metabolism; hydrogen sulfide biosynthesis; sulfite from sulfate: step 2/3.</text>
</comment>
<comment type="subunit">
    <text evidence="1">Heterodimer composed of CysD, the smaller subunit, and CysNC.</text>
</comment>
<comment type="similarity">
    <text evidence="4">In the C-terminal section; belongs to the APS kinase family.</text>
</comment>
<comment type="similarity">
    <text evidence="4">In the N-terminal section; belongs to the TRAFAC class translation factor GTPase superfamily. Classic translation factor GTPase family. CysN/NodQ subfamily.</text>
</comment>
<name>CYSNC_MYCTO</name>
<dbReference type="EC" id="2.7.7.4"/>
<dbReference type="EC" id="2.7.1.25"/>
<dbReference type="EMBL" id="AE000516">
    <property type="protein sequence ID" value="AAK45585.1"/>
    <property type="molecule type" value="Genomic_DNA"/>
</dbReference>
<dbReference type="PIR" id="B70772">
    <property type="entry name" value="B70772"/>
</dbReference>
<dbReference type="SMR" id="P9WNM4"/>
<dbReference type="KEGG" id="mtc:MT1324"/>
<dbReference type="PATRIC" id="fig|83331.31.peg.1430"/>
<dbReference type="HOGENOM" id="CLU_007265_5_3_11"/>
<dbReference type="UniPathway" id="UPA00140">
    <property type="reaction ID" value="UER00204"/>
</dbReference>
<dbReference type="UniPathway" id="UPA00140">
    <property type="reaction ID" value="UER00205"/>
</dbReference>
<dbReference type="Proteomes" id="UP000001020">
    <property type="component" value="Chromosome"/>
</dbReference>
<dbReference type="GO" id="GO:0004020">
    <property type="term" value="F:adenylylsulfate kinase activity"/>
    <property type="evidence" value="ECO:0007669"/>
    <property type="project" value="UniProtKB-UniRule"/>
</dbReference>
<dbReference type="GO" id="GO:0005524">
    <property type="term" value="F:ATP binding"/>
    <property type="evidence" value="ECO:0007669"/>
    <property type="project" value="UniProtKB-UniRule"/>
</dbReference>
<dbReference type="GO" id="GO:0005525">
    <property type="term" value="F:GTP binding"/>
    <property type="evidence" value="ECO:0007669"/>
    <property type="project" value="UniProtKB-UniRule"/>
</dbReference>
<dbReference type="GO" id="GO:0003924">
    <property type="term" value="F:GTPase activity"/>
    <property type="evidence" value="ECO:0007669"/>
    <property type="project" value="InterPro"/>
</dbReference>
<dbReference type="GO" id="GO:0004781">
    <property type="term" value="F:sulfate adenylyltransferase (ATP) activity"/>
    <property type="evidence" value="ECO:0007669"/>
    <property type="project" value="UniProtKB-UniRule"/>
</dbReference>
<dbReference type="GO" id="GO:0070814">
    <property type="term" value="P:hydrogen sulfide biosynthetic process"/>
    <property type="evidence" value="ECO:0007669"/>
    <property type="project" value="UniProtKB-UniRule"/>
</dbReference>
<dbReference type="GO" id="GO:0000103">
    <property type="term" value="P:sulfate assimilation"/>
    <property type="evidence" value="ECO:0007669"/>
    <property type="project" value="UniProtKB-UniRule"/>
</dbReference>
<dbReference type="CDD" id="cd02027">
    <property type="entry name" value="APSK"/>
    <property type="match status" value="1"/>
</dbReference>
<dbReference type="CDD" id="cd04166">
    <property type="entry name" value="CysN_ATPS"/>
    <property type="match status" value="1"/>
</dbReference>
<dbReference type="CDD" id="cd03695">
    <property type="entry name" value="CysN_NodQ_II"/>
    <property type="match status" value="1"/>
</dbReference>
<dbReference type="CDD" id="cd04095">
    <property type="entry name" value="CysN_NoDQ_III"/>
    <property type="match status" value="1"/>
</dbReference>
<dbReference type="FunFam" id="3.40.50.300:FF:001639">
    <property type="entry name" value="Multifunctional fusion protein"/>
    <property type="match status" value="1"/>
</dbReference>
<dbReference type="FunFam" id="2.40.30.10:FF:000027">
    <property type="entry name" value="Sulfate adenylyltransferase subunit 1"/>
    <property type="match status" value="1"/>
</dbReference>
<dbReference type="FunFam" id="3.40.50.300:FF:000119">
    <property type="entry name" value="Sulfate adenylyltransferase subunit 1"/>
    <property type="match status" value="1"/>
</dbReference>
<dbReference type="Gene3D" id="3.40.50.300">
    <property type="entry name" value="P-loop containing nucleotide triphosphate hydrolases"/>
    <property type="match status" value="2"/>
</dbReference>
<dbReference type="Gene3D" id="2.40.30.10">
    <property type="entry name" value="Translation factors"/>
    <property type="match status" value="2"/>
</dbReference>
<dbReference type="HAMAP" id="MF_00065">
    <property type="entry name" value="Adenylyl_sulf_kinase"/>
    <property type="match status" value="1"/>
</dbReference>
<dbReference type="HAMAP" id="MF_00062">
    <property type="entry name" value="Sulf_adenylyltr_sub1"/>
    <property type="match status" value="1"/>
</dbReference>
<dbReference type="InterPro" id="IPR002891">
    <property type="entry name" value="APS_kinase"/>
</dbReference>
<dbReference type="InterPro" id="IPR041757">
    <property type="entry name" value="CysN_GTP-bd"/>
</dbReference>
<dbReference type="InterPro" id="IPR044138">
    <property type="entry name" value="CysN_II"/>
</dbReference>
<dbReference type="InterPro" id="IPR044139">
    <property type="entry name" value="CysN_NoDQ_III"/>
</dbReference>
<dbReference type="InterPro" id="IPR031157">
    <property type="entry name" value="G_TR_CS"/>
</dbReference>
<dbReference type="InterPro" id="IPR054696">
    <property type="entry name" value="GTP-eEF1A_C"/>
</dbReference>
<dbReference type="InterPro" id="IPR027417">
    <property type="entry name" value="P-loop_NTPase"/>
</dbReference>
<dbReference type="InterPro" id="IPR011779">
    <property type="entry name" value="SO4_adenylTrfase_lsu"/>
</dbReference>
<dbReference type="InterPro" id="IPR000795">
    <property type="entry name" value="T_Tr_GTP-bd_dom"/>
</dbReference>
<dbReference type="InterPro" id="IPR050100">
    <property type="entry name" value="TRAFAC_GTPase_members"/>
</dbReference>
<dbReference type="InterPro" id="IPR009000">
    <property type="entry name" value="Transl_B-barrel_sf"/>
</dbReference>
<dbReference type="InterPro" id="IPR009001">
    <property type="entry name" value="Transl_elong_EF1A/Init_IF2_C"/>
</dbReference>
<dbReference type="NCBIfam" id="TIGR00455">
    <property type="entry name" value="apsK"/>
    <property type="match status" value="1"/>
</dbReference>
<dbReference type="NCBIfam" id="TIGR02034">
    <property type="entry name" value="CysN"/>
    <property type="match status" value="1"/>
</dbReference>
<dbReference type="NCBIfam" id="NF003013">
    <property type="entry name" value="PRK03846.1"/>
    <property type="match status" value="1"/>
</dbReference>
<dbReference type="NCBIfam" id="NF004035">
    <property type="entry name" value="PRK05506.1"/>
    <property type="match status" value="1"/>
</dbReference>
<dbReference type="PANTHER" id="PTHR23115">
    <property type="entry name" value="TRANSLATION FACTOR"/>
    <property type="match status" value="1"/>
</dbReference>
<dbReference type="Pfam" id="PF01583">
    <property type="entry name" value="APS_kinase"/>
    <property type="match status" value="1"/>
</dbReference>
<dbReference type="Pfam" id="PF22594">
    <property type="entry name" value="GTP-eEF1A_C"/>
    <property type="match status" value="1"/>
</dbReference>
<dbReference type="Pfam" id="PF00009">
    <property type="entry name" value="GTP_EFTU"/>
    <property type="match status" value="1"/>
</dbReference>
<dbReference type="PRINTS" id="PR00315">
    <property type="entry name" value="ELONGATNFCT"/>
</dbReference>
<dbReference type="SUPFAM" id="SSF50465">
    <property type="entry name" value="EF-Tu/eEF-1alpha/eIF2-gamma C-terminal domain"/>
    <property type="match status" value="1"/>
</dbReference>
<dbReference type="SUPFAM" id="SSF52540">
    <property type="entry name" value="P-loop containing nucleoside triphosphate hydrolases"/>
    <property type="match status" value="2"/>
</dbReference>
<dbReference type="SUPFAM" id="SSF50447">
    <property type="entry name" value="Translation proteins"/>
    <property type="match status" value="1"/>
</dbReference>
<dbReference type="PROSITE" id="PS00301">
    <property type="entry name" value="G_TR_1"/>
    <property type="match status" value="1"/>
</dbReference>
<dbReference type="PROSITE" id="PS51722">
    <property type="entry name" value="G_TR_2"/>
    <property type="match status" value="1"/>
</dbReference>
<organism>
    <name type="scientific">Mycobacterium tuberculosis (strain CDC 1551 / Oshkosh)</name>
    <dbReference type="NCBI Taxonomy" id="83331"/>
    <lineage>
        <taxon>Bacteria</taxon>
        <taxon>Bacillati</taxon>
        <taxon>Actinomycetota</taxon>
        <taxon>Actinomycetes</taxon>
        <taxon>Mycobacteriales</taxon>
        <taxon>Mycobacteriaceae</taxon>
        <taxon>Mycobacterium</taxon>
        <taxon>Mycobacterium tuberculosis complex</taxon>
    </lineage>
</organism>
<sequence>MTTLLRLATAGSVDDGKSTLIGRLLYDSKAVMEDQWASVEQTSKDRGHDYTDLALVTDGLRAEREQGITIDVAYRYFATPKRKFIIADTPGHIQYTRNMVTGASTAQLVIVLVDARHGLLEQSRRHAFLASLLGIRHLVLAVNKMDLLGWDQEKFDAIRDEFHAFAARLDVQDVTSIPISALHGDNVVTKSDQTPWYEGPSLLSHLEDVYIAGDRNMVDVRFPVQYVIRPHTLEHQDHRSYAGTVASGVMRSGDEVVVLPIGKTTRITAIDGPNGPVAEAFPPMAVSVRLADDIDISRGDMIARTHNQPRITQEFDATVCWMADNAVLEPGRDYVVKHTTRTVRARIAGLDYRLDVNTLHRDKTATALKLNELGRVSLRTQVPLLLDEYTRNASTGSFILIDPDTNGTVAAGMVLRDVSARTPSPNTVRHRSLVTAQDRPPRGKTVWFTGLSGSGKSSVAMLVERKLLEKGISAYVLDGDNLRHGLNADLGFSMADRAENLRRLSHVATLLADCGHLVLVPAISPLAEHRALARKVHADAGIDFFEVFCDTPLQDCERRDPKGLYAKARAGEITHFTGIDSPYQRPKNPDLRLTPDRSIDEQAQEVIDLLESSS</sequence>